<dbReference type="EC" id="5.3.1.9" evidence="1"/>
<dbReference type="EMBL" id="AM286280">
    <property type="protein sequence ID" value="CAL09331.1"/>
    <property type="molecule type" value="Genomic_DNA"/>
</dbReference>
<dbReference type="RefSeq" id="WP_003022047.1">
    <property type="nucleotide sequence ID" value="NC_008245.1"/>
</dbReference>
<dbReference type="SMR" id="Q14GS7"/>
<dbReference type="KEGG" id="ftf:FTF1315c"/>
<dbReference type="HOGENOM" id="CLU_017947_3_1_6"/>
<dbReference type="UniPathway" id="UPA00109">
    <property type="reaction ID" value="UER00181"/>
</dbReference>
<dbReference type="UniPathway" id="UPA00138"/>
<dbReference type="GO" id="GO:0005829">
    <property type="term" value="C:cytosol"/>
    <property type="evidence" value="ECO:0007669"/>
    <property type="project" value="TreeGrafter"/>
</dbReference>
<dbReference type="GO" id="GO:0097367">
    <property type="term" value="F:carbohydrate derivative binding"/>
    <property type="evidence" value="ECO:0007669"/>
    <property type="project" value="InterPro"/>
</dbReference>
<dbReference type="GO" id="GO:0004347">
    <property type="term" value="F:glucose-6-phosphate isomerase activity"/>
    <property type="evidence" value="ECO:0007669"/>
    <property type="project" value="UniProtKB-UniRule"/>
</dbReference>
<dbReference type="GO" id="GO:0048029">
    <property type="term" value="F:monosaccharide binding"/>
    <property type="evidence" value="ECO:0007669"/>
    <property type="project" value="TreeGrafter"/>
</dbReference>
<dbReference type="GO" id="GO:0006094">
    <property type="term" value="P:gluconeogenesis"/>
    <property type="evidence" value="ECO:0007669"/>
    <property type="project" value="UniProtKB-UniRule"/>
</dbReference>
<dbReference type="GO" id="GO:0051156">
    <property type="term" value="P:glucose 6-phosphate metabolic process"/>
    <property type="evidence" value="ECO:0007669"/>
    <property type="project" value="TreeGrafter"/>
</dbReference>
<dbReference type="GO" id="GO:0006096">
    <property type="term" value="P:glycolytic process"/>
    <property type="evidence" value="ECO:0007669"/>
    <property type="project" value="UniProtKB-UniRule"/>
</dbReference>
<dbReference type="CDD" id="cd05015">
    <property type="entry name" value="SIS_PGI_1"/>
    <property type="match status" value="1"/>
</dbReference>
<dbReference type="CDD" id="cd05016">
    <property type="entry name" value="SIS_PGI_2"/>
    <property type="match status" value="1"/>
</dbReference>
<dbReference type="Gene3D" id="1.10.1390.10">
    <property type="match status" value="1"/>
</dbReference>
<dbReference type="Gene3D" id="3.40.50.10490">
    <property type="entry name" value="Glucose-6-phosphate isomerase like protein, domain 1"/>
    <property type="match status" value="2"/>
</dbReference>
<dbReference type="HAMAP" id="MF_00473">
    <property type="entry name" value="G6P_isomerase"/>
    <property type="match status" value="1"/>
</dbReference>
<dbReference type="InterPro" id="IPR001672">
    <property type="entry name" value="G6P_Isomerase"/>
</dbReference>
<dbReference type="InterPro" id="IPR023096">
    <property type="entry name" value="G6P_Isomerase_C"/>
</dbReference>
<dbReference type="InterPro" id="IPR018189">
    <property type="entry name" value="Phosphoglucose_isomerase_CS"/>
</dbReference>
<dbReference type="InterPro" id="IPR046348">
    <property type="entry name" value="SIS_dom_sf"/>
</dbReference>
<dbReference type="InterPro" id="IPR035476">
    <property type="entry name" value="SIS_PGI_1"/>
</dbReference>
<dbReference type="InterPro" id="IPR035482">
    <property type="entry name" value="SIS_PGI_2"/>
</dbReference>
<dbReference type="NCBIfam" id="NF001211">
    <property type="entry name" value="PRK00179.1"/>
    <property type="match status" value="1"/>
</dbReference>
<dbReference type="PANTHER" id="PTHR11469">
    <property type="entry name" value="GLUCOSE-6-PHOSPHATE ISOMERASE"/>
    <property type="match status" value="1"/>
</dbReference>
<dbReference type="PANTHER" id="PTHR11469:SF1">
    <property type="entry name" value="GLUCOSE-6-PHOSPHATE ISOMERASE"/>
    <property type="match status" value="1"/>
</dbReference>
<dbReference type="Pfam" id="PF00342">
    <property type="entry name" value="PGI"/>
    <property type="match status" value="1"/>
</dbReference>
<dbReference type="PRINTS" id="PR00662">
    <property type="entry name" value="G6PISOMERASE"/>
</dbReference>
<dbReference type="SUPFAM" id="SSF53697">
    <property type="entry name" value="SIS domain"/>
    <property type="match status" value="1"/>
</dbReference>
<dbReference type="PROSITE" id="PS00765">
    <property type="entry name" value="P_GLUCOSE_ISOMERASE_1"/>
    <property type="match status" value="1"/>
</dbReference>
<dbReference type="PROSITE" id="PS00174">
    <property type="entry name" value="P_GLUCOSE_ISOMERASE_2"/>
    <property type="match status" value="1"/>
</dbReference>
<dbReference type="PROSITE" id="PS51463">
    <property type="entry name" value="P_GLUCOSE_ISOMERASE_3"/>
    <property type="match status" value="1"/>
</dbReference>
<comment type="function">
    <text evidence="1">Catalyzes the reversible isomerization of glucose-6-phosphate to fructose-6-phosphate.</text>
</comment>
<comment type="catalytic activity">
    <reaction evidence="1">
        <text>alpha-D-glucose 6-phosphate = beta-D-fructose 6-phosphate</text>
        <dbReference type="Rhea" id="RHEA:11816"/>
        <dbReference type="ChEBI" id="CHEBI:57634"/>
        <dbReference type="ChEBI" id="CHEBI:58225"/>
        <dbReference type="EC" id="5.3.1.9"/>
    </reaction>
</comment>
<comment type="pathway">
    <text evidence="1">Carbohydrate biosynthesis; gluconeogenesis.</text>
</comment>
<comment type="pathway">
    <text evidence="1">Carbohydrate degradation; glycolysis; D-glyceraldehyde 3-phosphate and glycerone phosphate from D-glucose: step 2/4.</text>
</comment>
<comment type="subcellular location">
    <subcellularLocation>
        <location evidence="1">Cytoplasm</location>
    </subcellularLocation>
</comment>
<comment type="similarity">
    <text evidence="1">Belongs to the GPI family.</text>
</comment>
<keyword id="KW-0963">Cytoplasm</keyword>
<keyword id="KW-0312">Gluconeogenesis</keyword>
<keyword id="KW-0324">Glycolysis</keyword>
<keyword id="KW-0413">Isomerase</keyword>
<reference key="1">
    <citation type="journal article" date="2007" name="PLoS ONE">
        <title>Genome sequencing shows that European isolates of Francisella tularensis subspecies tularensis are almost identical to US laboratory strain Schu S4.</title>
        <authorList>
            <person name="Chaudhuri R.R."/>
            <person name="Ren C.-P."/>
            <person name="Desmond L."/>
            <person name="Vincent G.A."/>
            <person name="Silman N.J."/>
            <person name="Brehm J.K."/>
            <person name="Elmore M.J."/>
            <person name="Hudson M.J."/>
            <person name="Forsman M."/>
            <person name="Isherwood K.E."/>
            <person name="Gurycova D."/>
            <person name="Minton N.P."/>
            <person name="Titball R.W."/>
            <person name="Pallen M.J."/>
            <person name="Vipond R."/>
        </authorList>
    </citation>
    <scope>NUCLEOTIDE SEQUENCE [LARGE SCALE GENOMIC DNA]</scope>
    <source>
        <strain>FSC 198</strain>
    </source>
</reference>
<feature type="chain" id="PRO_1000013965" description="Glucose-6-phosphate isomerase">
    <location>
        <begin position="1"/>
        <end position="540"/>
    </location>
</feature>
<feature type="active site" description="Proton donor" evidence="1">
    <location>
        <position position="346"/>
    </location>
</feature>
<feature type="active site" evidence="1">
    <location>
        <position position="377"/>
    </location>
</feature>
<feature type="active site" evidence="1">
    <location>
        <position position="505"/>
    </location>
</feature>
<gene>
    <name evidence="1" type="primary">pgi</name>
    <name type="ordered locus">FTF1315c</name>
</gene>
<proteinExistence type="inferred from homology"/>
<protein>
    <recommendedName>
        <fullName evidence="1">Glucose-6-phosphate isomerase</fullName>
        <shortName evidence="1">GPI</shortName>
        <ecNumber evidence="1">5.3.1.9</ecNumber>
    </recommendedName>
    <alternativeName>
        <fullName evidence="1">Phosphoglucose isomerase</fullName>
        <shortName evidence="1">PGI</shortName>
    </alternativeName>
    <alternativeName>
        <fullName evidence="1">Phosphohexose isomerase</fullName>
        <shortName evidence="1">PHI</shortName>
    </alternativeName>
</protein>
<sequence>MLFCDDSKKYLKEQNINLKNEFDKDDKRVEKFSLKHQNIYFDYSKNLINDYILKSLLESAEKSSLKDKIKQMFNGAKINSTEHRAVLHTALRDLSSTPLIVDGQDIRQEVTKEKQRVKELVEKVVSGRWRGFSGKKITDIVNIGIGGSDLGPKMVVRALQPYHCTDLKVHFVSNVDADSLLQALHVVDPETTLFIIASKSFSTEETLLNSISAREWLLDHYEDEKAVANHFVAISSKLDKVKEFGIDLEHCYKMWDWVGGRYSLWSSIGMSIAFAIGYDNFEKLLAGAYSVDKHFKETEFSKNIPVIMALLASYYSCTYNSQSQALLPYDERLCYFVDYLQQADMESNGKSVNIAGETVNYQTGVVLWGGVGTNGQHAFHQLLHQGNIFIPVDFIAIATSHHNYDNHQQALLANCFAQSQALMFGQSYDMVYNELLKSGLNETQAKELAAHKVIPGNRPSTTILLDELSPYSLGALIALYEHKIFVQGVLWDINSYDQWGVELGKKLGKNILKAMNDDSSDEYQNLDDSTRQLIAKVKNK</sequence>
<accession>Q14GS7</accession>
<organism>
    <name type="scientific">Francisella tularensis subsp. tularensis (strain FSC 198)</name>
    <dbReference type="NCBI Taxonomy" id="393115"/>
    <lineage>
        <taxon>Bacteria</taxon>
        <taxon>Pseudomonadati</taxon>
        <taxon>Pseudomonadota</taxon>
        <taxon>Gammaproteobacteria</taxon>
        <taxon>Thiotrichales</taxon>
        <taxon>Francisellaceae</taxon>
        <taxon>Francisella</taxon>
    </lineage>
</organism>
<evidence type="ECO:0000255" key="1">
    <source>
        <dbReference type="HAMAP-Rule" id="MF_00473"/>
    </source>
</evidence>
<name>G6PI_FRAT1</name>